<accession>B7M860</accession>
<dbReference type="EC" id="6.3.4.21" evidence="1"/>
<dbReference type="EMBL" id="CU928160">
    <property type="protein sequence ID" value="CAQ97836.1"/>
    <property type="molecule type" value="Genomic_DNA"/>
</dbReference>
<dbReference type="RefSeq" id="WP_001297200.1">
    <property type="nucleotide sequence ID" value="NC_011741.1"/>
</dbReference>
<dbReference type="SMR" id="B7M860"/>
<dbReference type="GeneID" id="93776483"/>
<dbReference type="KEGG" id="ecr:ECIAI1_0972"/>
<dbReference type="HOGENOM" id="CLU_030991_1_0_6"/>
<dbReference type="UniPathway" id="UPA00253">
    <property type="reaction ID" value="UER00457"/>
</dbReference>
<dbReference type="GO" id="GO:0005829">
    <property type="term" value="C:cytosol"/>
    <property type="evidence" value="ECO:0007669"/>
    <property type="project" value="TreeGrafter"/>
</dbReference>
<dbReference type="GO" id="GO:0004516">
    <property type="term" value="F:nicotinate phosphoribosyltransferase activity"/>
    <property type="evidence" value="ECO:0007669"/>
    <property type="project" value="UniProtKB-UniRule"/>
</dbReference>
<dbReference type="GO" id="GO:0034355">
    <property type="term" value="P:NAD biosynthetic process via the salvage pathway"/>
    <property type="evidence" value="ECO:0007669"/>
    <property type="project" value="TreeGrafter"/>
</dbReference>
<dbReference type="CDD" id="cd01401">
    <property type="entry name" value="PncB_like"/>
    <property type="match status" value="1"/>
</dbReference>
<dbReference type="FunFam" id="3.20.140.10:FF:000001">
    <property type="entry name" value="Nicotinate phosphoribosyltransferase"/>
    <property type="match status" value="1"/>
</dbReference>
<dbReference type="Gene3D" id="3.20.140.10">
    <property type="entry name" value="nicotinate phosphoribosyltransferase"/>
    <property type="match status" value="1"/>
</dbReference>
<dbReference type="HAMAP" id="MF_00570">
    <property type="entry name" value="NAPRTase"/>
    <property type="match status" value="1"/>
</dbReference>
<dbReference type="InterPro" id="IPR041525">
    <property type="entry name" value="N/Namide_PRibTrfase"/>
</dbReference>
<dbReference type="InterPro" id="IPR040727">
    <property type="entry name" value="NAPRTase_N"/>
</dbReference>
<dbReference type="InterPro" id="IPR006406">
    <property type="entry name" value="Nic_PRibTrfase"/>
</dbReference>
<dbReference type="InterPro" id="IPR007229">
    <property type="entry name" value="Nic_PRibTrfase-Fam"/>
</dbReference>
<dbReference type="InterPro" id="IPR036068">
    <property type="entry name" value="Nicotinate_pribotase-like_C"/>
</dbReference>
<dbReference type="NCBIfam" id="TIGR01514">
    <property type="entry name" value="NAPRTase"/>
    <property type="match status" value="1"/>
</dbReference>
<dbReference type="NCBIfam" id="NF003704">
    <property type="entry name" value="PRK05321.1"/>
    <property type="match status" value="1"/>
</dbReference>
<dbReference type="PANTHER" id="PTHR11098">
    <property type="entry name" value="NICOTINATE PHOSPHORIBOSYLTRANSFERASE"/>
    <property type="match status" value="1"/>
</dbReference>
<dbReference type="PANTHER" id="PTHR11098:SF1">
    <property type="entry name" value="NICOTINATE PHOSPHORIBOSYLTRANSFERASE"/>
    <property type="match status" value="1"/>
</dbReference>
<dbReference type="Pfam" id="PF04095">
    <property type="entry name" value="NAPRTase"/>
    <property type="match status" value="1"/>
</dbReference>
<dbReference type="Pfam" id="PF17767">
    <property type="entry name" value="NAPRTase_N"/>
    <property type="match status" value="1"/>
</dbReference>
<dbReference type="PIRSF" id="PIRSF000484">
    <property type="entry name" value="NAPRT"/>
    <property type="match status" value="1"/>
</dbReference>
<dbReference type="SUPFAM" id="SSF51690">
    <property type="entry name" value="Nicotinate/Quinolinate PRTase C-terminal domain-like"/>
    <property type="match status" value="1"/>
</dbReference>
<dbReference type="SUPFAM" id="SSF54675">
    <property type="entry name" value="Nicotinate/Quinolinate PRTase N-terminal domain-like"/>
    <property type="match status" value="1"/>
</dbReference>
<comment type="function">
    <text evidence="1">Catalyzes the synthesis of beta-nicotinate D-ribonucleotide from nicotinate and 5-phospho-D-ribose 1-phosphate at the expense of ATP.</text>
</comment>
<comment type="catalytic activity">
    <reaction evidence="1">
        <text>nicotinate + 5-phospho-alpha-D-ribose 1-diphosphate + ATP + H2O = nicotinate beta-D-ribonucleotide + ADP + phosphate + diphosphate</text>
        <dbReference type="Rhea" id="RHEA:36163"/>
        <dbReference type="ChEBI" id="CHEBI:15377"/>
        <dbReference type="ChEBI" id="CHEBI:30616"/>
        <dbReference type="ChEBI" id="CHEBI:32544"/>
        <dbReference type="ChEBI" id="CHEBI:33019"/>
        <dbReference type="ChEBI" id="CHEBI:43474"/>
        <dbReference type="ChEBI" id="CHEBI:57502"/>
        <dbReference type="ChEBI" id="CHEBI:58017"/>
        <dbReference type="ChEBI" id="CHEBI:456216"/>
        <dbReference type="EC" id="6.3.4.21"/>
    </reaction>
</comment>
<comment type="pathway">
    <text evidence="1">Cofactor biosynthesis; NAD(+) biosynthesis; nicotinate D-ribonucleotide from nicotinate: step 1/1.</text>
</comment>
<comment type="PTM">
    <text evidence="1">Transiently phosphorylated on a His residue during the reaction cycle. Phosphorylation strongly increases the affinity for substrates and increases the rate of nicotinate D-ribonucleotide production. Dephosphorylation regenerates the low-affinity form of the enzyme, leading to product release.</text>
</comment>
<comment type="similarity">
    <text evidence="1">Belongs to the NAPRTase family.</text>
</comment>
<organism>
    <name type="scientific">Escherichia coli O8 (strain IAI1)</name>
    <dbReference type="NCBI Taxonomy" id="585034"/>
    <lineage>
        <taxon>Bacteria</taxon>
        <taxon>Pseudomonadati</taxon>
        <taxon>Pseudomonadota</taxon>
        <taxon>Gammaproteobacteria</taxon>
        <taxon>Enterobacterales</taxon>
        <taxon>Enterobacteriaceae</taxon>
        <taxon>Escherichia</taxon>
    </lineage>
</organism>
<sequence>MTQFASPVLHSLLDTDAYKLHMQQAVFHHYYDVHVAAEFRCRGDDLLGIYADAIREQIQAMQHLRLQDDEYQWLSALPFFKADYLNWLREFRFNPEQVTVSNDNGKLDIRLSGPWREVILWEVPLLAVISEMVHRYRSPQADVAQALDTLESKLVDFSALTAGLDMSRFHLMDFGTRRRFSREVQETIVKRLQQESWFVGTSNYDLARRLSLTPMGTQAHEWFQAHQQISPDLANSQRAALAAWLEEYPDQLGIALTDCITMDAFLRDFGVEFASRYQGLRHDSGDPVEWGEKAIAHYEKLGIDPQSKTLVFSDNLDLRKAVELYRHFSSRVQLSFGIGTRLTCDIPQVKPLNIVIKLVECNGKPVAKLSDSPGKTICHDKAFVRALRKAFDLPHIKKAS</sequence>
<proteinExistence type="inferred from homology"/>
<protein>
    <recommendedName>
        <fullName evidence="1">Nicotinate phosphoribosyltransferase</fullName>
        <shortName evidence="1">NAPRTase</shortName>
        <ecNumber evidence="1">6.3.4.21</ecNumber>
    </recommendedName>
</protein>
<name>PNCB_ECO8A</name>
<feature type="chain" id="PRO_1000129468" description="Nicotinate phosphoribosyltransferase">
    <location>
        <begin position="1"/>
        <end position="400"/>
    </location>
</feature>
<feature type="modified residue" description="Phosphohistidine; by autocatalysis" evidence="1">
    <location>
        <position position="220"/>
    </location>
</feature>
<gene>
    <name evidence="1" type="primary">pncB</name>
    <name type="ordered locus">ECIAI1_0972</name>
</gene>
<reference key="1">
    <citation type="journal article" date="2009" name="PLoS Genet.">
        <title>Organised genome dynamics in the Escherichia coli species results in highly diverse adaptive paths.</title>
        <authorList>
            <person name="Touchon M."/>
            <person name="Hoede C."/>
            <person name="Tenaillon O."/>
            <person name="Barbe V."/>
            <person name="Baeriswyl S."/>
            <person name="Bidet P."/>
            <person name="Bingen E."/>
            <person name="Bonacorsi S."/>
            <person name="Bouchier C."/>
            <person name="Bouvet O."/>
            <person name="Calteau A."/>
            <person name="Chiapello H."/>
            <person name="Clermont O."/>
            <person name="Cruveiller S."/>
            <person name="Danchin A."/>
            <person name="Diard M."/>
            <person name="Dossat C."/>
            <person name="Karoui M.E."/>
            <person name="Frapy E."/>
            <person name="Garry L."/>
            <person name="Ghigo J.M."/>
            <person name="Gilles A.M."/>
            <person name="Johnson J."/>
            <person name="Le Bouguenec C."/>
            <person name="Lescat M."/>
            <person name="Mangenot S."/>
            <person name="Martinez-Jehanne V."/>
            <person name="Matic I."/>
            <person name="Nassif X."/>
            <person name="Oztas S."/>
            <person name="Petit M.A."/>
            <person name="Pichon C."/>
            <person name="Rouy Z."/>
            <person name="Ruf C.S."/>
            <person name="Schneider D."/>
            <person name="Tourret J."/>
            <person name="Vacherie B."/>
            <person name="Vallenet D."/>
            <person name="Medigue C."/>
            <person name="Rocha E.P.C."/>
            <person name="Denamur E."/>
        </authorList>
    </citation>
    <scope>NUCLEOTIDE SEQUENCE [LARGE SCALE GENOMIC DNA]</scope>
    <source>
        <strain>IAI1</strain>
    </source>
</reference>
<evidence type="ECO:0000255" key="1">
    <source>
        <dbReference type="HAMAP-Rule" id="MF_00570"/>
    </source>
</evidence>
<keyword id="KW-0436">Ligase</keyword>
<keyword id="KW-0597">Phosphoprotein</keyword>
<keyword id="KW-0662">Pyridine nucleotide biosynthesis</keyword>